<protein>
    <recommendedName>
        <fullName>Cyclin-dependent kinases regulatory subunit</fullName>
    </recommendedName>
</protein>
<accession>Q17868</accession>
<feature type="chain" id="PRO_0000206244" description="Cyclin-dependent kinases regulatory subunit">
    <location>
        <begin position="1"/>
        <end position="94"/>
    </location>
</feature>
<feature type="mutagenesis site" description="In ne549; reduces cdk-1 binding." evidence="3">
    <original>Y</original>
    <variation>F</variation>
    <location>
        <position position="10"/>
    </location>
</feature>
<keyword id="KW-0131">Cell cycle</keyword>
<keyword id="KW-0132">Cell division</keyword>
<keyword id="KW-0498">Mitosis</keyword>
<keyword id="KW-0539">Nucleus</keyword>
<keyword id="KW-1185">Reference proteome</keyword>
<reference key="1">
    <citation type="journal article" date="1998" name="Development">
        <title>The polycomb group in Caenorhabditis elegans and maternal control of germline development.</title>
        <authorList>
            <person name="Korf I."/>
            <person name="Fan Y."/>
            <person name="Strome S."/>
        </authorList>
    </citation>
    <scope>NUCLEOTIDE SEQUENCE [GENOMIC DNA]</scope>
    <source>
        <strain>Bristol N2</strain>
    </source>
</reference>
<reference key="2">
    <citation type="journal article" date="1998" name="Science">
        <title>Genome sequence of the nematode C. elegans: a platform for investigating biology.</title>
        <authorList>
            <consortium name="The C. elegans sequencing consortium"/>
        </authorList>
    </citation>
    <scope>NUCLEOTIDE SEQUENCE [LARGE SCALE GENOMIC DNA]</scope>
    <source>
        <strain>Bristol N2</strain>
    </source>
</reference>
<reference key="3">
    <citation type="journal article" date="2000" name="Curr. Biol.">
        <title>Depletion of a Cks homolog in C. elegans embryos uncovers a post-metaphase role in both meiosis and mitosis.</title>
        <authorList>
            <person name="Polinko E.S."/>
            <person name="Strome S."/>
        </authorList>
    </citation>
    <scope>FUNCTION</scope>
    <scope>DISRUPTION PHENOTYPE</scope>
</reference>
<reference key="4">
    <citation type="journal article" date="2006" name="Curr. Biol.">
        <title>The conserved kinases CDK-1, GSK-3, KIN-19, and MBK-2 promote OMA-1 destruction to regulate the oocyte-to-embryo transition in C. elegans.</title>
        <authorList>
            <person name="Shirayama M."/>
            <person name="Soto M.C."/>
            <person name="Ishidate T."/>
            <person name="Kim S."/>
            <person name="Nakamura K."/>
            <person name="Bei Y."/>
            <person name="van den Heuvel S."/>
            <person name="Mello C.C."/>
        </authorList>
    </citation>
    <scope>FUNCTION</scope>
    <scope>INTERACTION WITH CDK-1</scope>
    <scope>MUTAGENESIS OF TYR-10</scope>
</reference>
<dbReference type="EMBL" id="AF016224">
    <property type="protein sequence ID" value="AAC27123.1"/>
    <property type="molecule type" value="Genomic_DNA"/>
</dbReference>
<dbReference type="EMBL" id="FO080478">
    <property type="protein sequence ID" value="CCD63999.1"/>
    <property type="molecule type" value="Genomic_DNA"/>
</dbReference>
<dbReference type="PIR" id="T29829">
    <property type="entry name" value="T29829"/>
</dbReference>
<dbReference type="RefSeq" id="NP_001379647.1">
    <property type="nucleotide sequence ID" value="NM_001392353.1"/>
</dbReference>
<dbReference type="RefSeq" id="NP_501457.1">
    <property type="nucleotide sequence ID" value="NM_069056.6"/>
</dbReference>
<dbReference type="SMR" id="Q17868"/>
<dbReference type="BioGRID" id="42770">
    <property type="interactions" value="19"/>
</dbReference>
<dbReference type="DIP" id="DIP-25964N"/>
<dbReference type="FunCoup" id="Q17868">
    <property type="interactions" value="1438"/>
</dbReference>
<dbReference type="IntAct" id="Q17868">
    <property type="interactions" value="6"/>
</dbReference>
<dbReference type="STRING" id="6239.C09G4.3.1"/>
<dbReference type="PaxDb" id="6239-C09G4.3"/>
<dbReference type="PeptideAtlas" id="Q17868"/>
<dbReference type="EnsemblMetazoa" id="C09G4.3.1">
    <property type="protein sequence ID" value="C09G4.3.1"/>
    <property type="gene ID" value="WBGene00001051"/>
</dbReference>
<dbReference type="GeneID" id="177658"/>
<dbReference type="UCSC" id="C09G4.3">
    <property type="organism name" value="c. elegans"/>
</dbReference>
<dbReference type="AGR" id="WB:WBGene00001051"/>
<dbReference type="WormBase" id="C09G4.3">
    <property type="protein sequence ID" value="CE03980"/>
    <property type="gene ID" value="WBGene00001051"/>
    <property type="gene designation" value="cks-1"/>
</dbReference>
<dbReference type="eggNOG" id="KOG3484">
    <property type="taxonomic scope" value="Eukaryota"/>
</dbReference>
<dbReference type="GeneTree" id="ENSGT00950000182971"/>
<dbReference type="HOGENOM" id="CLU_140546_1_2_1"/>
<dbReference type="InParanoid" id="Q17868"/>
<dbReference type="OMA" id="MSENEWR"/>
<dbReference type="OrthoDB" id="440676at2759"/>
<dbReference type="PhylomeDB" id="Q17868"/>
<dbReference type="Reactome" id="R-CEL-187577">
    <property type="pathway name" value="SCF(Skp2)-mediated degradation of p27/p21"/>
</dbReference>
<dbReference type="Reactome" id="R-CEL-69231">
    <property type="pathway name" value="Cyclin D associated events in G1"/>
</dbReference>
<dbReference type="SignaLink" id="Q17868"/>
<dbReference type="PRO" id="PR:Q17868"/>
<dbReference type="Proteomes" id="UP000001940">
    <property type="component" value="Chromosome IV"/>
</dbReference>
<dbReference type="Bgee" id="WBGene00001051">
    <property type="expression patterns" value="Expressed in germ line (C elegans) and 4 other cell types or tissues"/>
</dbReference>
<dbReference type="GO" id="GO:0000307">
    <property type="term" value="C:cyclin-dependent protein kinase holoenzyme complex"/>
    <property type="evidence" value="ECO:0000318"/>
    <property type="project" value="GO_Central"/>
</dbReference>
<dbReference type="GO" id="GO:0005634">
    <property type="term" value="C:nucleus"/>
    <property type="evidence" value="ECO:0000305"/>
    <property type="project" value="UniProtKB"/>
</dbReference>
<dbReference type="GO" id="GO:0019005">
    <property type="term" value="C:SCF ubiquitin ligase complex"/>
    <property type="evidence" value="ECO:0000318"/>
    <property type="project" value="GO_Central"/>
</dbReference>
<dbReference type="GO" id="GO:0061575">
    <property type="term" value="F:cyclin-dependent protein serine/threonine kinase activator activity"/>
    <property type="evidence" value="ECO:0000318"/>
    <property type="project" value="GO_Central"/>
</dbReference>
<dbReference type="GO" id="GO:0042393">
    <property type="term" value="F:histone binding"/>
    <property type="evidence" value="ECO:0000318"/>
    <property type="project" value="GO_Central"/>
</dbReference>
<dbReference type="GO" id="GO:0019901">
    <property type="term" value="F:protein kinase binding"/>
    <property type="evidence" value="ECO:0000353"/>
    <property type="project" value="UniProtKB"/>
</dbReference>
<dbReference type="GO" id="GO:0043130">
    <property type="term" value="F:ubiquitin binding"/>
    <property type="evidence" value="ECO:0000318"/>
    <property type="project" value="GO_Central"/>
</dbReference>
<dbReference type="GO" id="GO:0051301">
    <property type="term" value="P:cell division"/>
    <property type="evidence" value="ECO:0007669"/>
    <property type="project" value="UniProtKB-KW"/>
</dbReference>
<dbReference type="GO" id="GO:0007346">
    <property type="term" value="P:regulation of mitotic cell cycle"/>
    <property type="evidence" value="ECO:0000318"/>
    <property type="project" value="GO_Central"/>
</dbReference>
<dbReference type="GO" id="GO:0009794">
    <property type="term" value="P:regulation of mitotic cell cycle, embryonic"/>
    <property type="evidence" value="ECO:0000315"/>
    <property type="project" value="UniProtKB"/>
</dbReference>
<dbReference type="FunFam" id="3.30.170.10:FF:000001">
    <property type="entry name" value="Cyclin-dependent kinases regulatory subunit"/>
    <property type="match status" value="1"/>
</dbReference>
<dbReference type="Gene3D" id="3.30.170.10">
    <property type="entry name" value="Cyclin-dependent kinase, regulatory subunit"/>
    <property type="match status" value="1"/>
</dbReference>
<dbReference type="InterPro" id="IPR000789">
    <property type="entry name" value="Cyclin-dep_kinase_reg-sub"/>
</dbReference>
<dbReference type="InterPro" id="IPR036858">
    <property type="entry name" value="Cyclin-dep_kinase_reg-sub_sf"/>
</dbReference>
<dbReference type="PANTHER" id="PTHR23415">
    <property type="entry name" value="CYCLIN-DEPENDENT KINASES REGULATORY SUBUNIT/60S RIBOSOME SUBUNIT BIOGENESIS PROTEIN NIP7"/>
    <property type="match status" value="1"/>
</dbReference>
<dbReference type="Pfam" id="PF01111">
    <property type="entry name" value="CKS"/>
    <property type="match status" value="1"/>
</dbReference>
<dbReference type="PRINTS" id="PR00296">
    <property type="entry name" value="CYCLINKINASE"/>
</dbReference>
<dbReference type="SMART" id="SM01084">
    <property type="entry name" value="CKS"/>
    <property type="match status" value="1"/>
</dbReference>
<dbReference type="SUPFAM" id="SSF55637">
    <property type="entry name" value="Cell cycle regulatory proteins"/>
    <property type="match status" value="1"/>
</dbReference>
<dbReference type="PROSITE" id="PS00944">
    <property type="entry name" value="CKS_1"/>
    <property type="match status" value="1"/>
</dbReference>
<dbReference type="PROSITE" id="PS00945">
    <property type="entry name" value="CKS_2"/>
    <property type="match status" value="1"/>
</dbReference>
<proteinExistence type="evidence at protein level"/>
<sequence length="94" mass="10952">MTTGNNDFYYSNKYEDDEFEYRHVHVTKDVSKLIPKNRLMSETEWRSLGIQQSPGWMHYMIHGPERHVLLFRRPLAATQKTGGNVRSGNAVGVR</sequence>
<gene>
    <name type="primary">cks-1</name>
    <name type="synonym">dom-6</name>
    <name type="ORF">C09G4.3</name>
</gene>
<organism>
    <name type="scientific">Caenorhabditis elegans</name>
    <dbReference type="NCBI Taxonomy" id="6239"/>
    <lineage>
        <taxon>Eukaryota</taxon>
        <taxon>Metazoa</taxon>
        <taxon>Ecdysozoa</taxon>
        <taxon>Nematoda</taxon>
        <taxon>Chromadorea</taxon>
        <taxon>Rhabditida</taxon>
        <taxon>Rhabditina</taxon>
        <taxon>Rhabditomorpha</taxon>
        <taxon>Rhabditoidea</taxon>
        <taxon>Rhabditidae</taxon>
        <taxon>Peloderinae</taxon>
        <taxon>Caenorhabditis</taxon>
    </lineage>
</organism>
<evidence type="ECO:0000250" key="1"/>
<evidence type="ECO:0000269" key="2">
    <source>
    </source>
</evidence>
<evidence type="ECO:0000269" key="3">
    <source>
    </source>
</evidence>
<evidence type="ECO:0000305" key="4"/>
<name>CKS1_CAEEL</name>
<comment type="function">
    <text evidence="1 2 3">Binds to the catalytic subunit of the cyclin dependent kinases and is essential for their biological function (By similarity). Has a role in the exit from M phase during early mitotic cell division. More specifically, thought to act by degrading B-type cyclins that causes breakdown of nuclear envelope and exit mitosis.</text>
</comment>
<comment type="subunit">
    <text evidence="1 3">Forms a homohexamer that can probably bind six kinase subunits (By similarity). Interacts with cdk-1.</text>
</comment>
<comment type="subcellular location">
    <subcellularLocation>
        <location evidence="4">Nucleus</location>
    </subcellularLocation>
</comment>
<comment type="disruption phenotype">
    <text evidence="2">Worms exhibit defects in the completion of maternal meiosis, embryonic mitosis and arrest in embryogenesis.</text>
</comment>
<comment type="similarity">
    <text evidence="4">Belongs to the CKS family.</text>
</comment>